<evidence type="ECO:0000255" key="1">
    <source>
        <dbReference type="HAMAP-Rule" id="MF_00059"/>
    </source>
</evidence>
<gene>
    <name evidence="1" type="primary">rpoA</name>
    <name type="ordered locus">Pmen_3884</name>
</gene>
<dbReference type="EC" id="2.7.7.6" evidence="1"/>
<dbReference type="EMBL" id="CP000680">
    <property type="protein sequence ID" value="ABP86631.1"/>
    <property type="molecule type" value="Genomic_DNA"/>
</dbReference>
<dbReference type="SMR" id="A4XZ65"/>
<dbReference type="STRING" id="399739.Pmen_3884"/>
<dbReference type="KEGG" id="pmy:Pmen_3884"/>
<dbReference type="eggNOG" id="COG0202">
    <property type="taxonomic scope" value="Bacteria"/>
</dbReference>
<dbReference type="HOGENOM" id="CLU_053084_0_0_6"/>
<dbReference type="OrthoDB" id="9805706at2"/>
<dbReference type="GO" id="GO:0005737">
    <property type="term" value="C:cytoplasm"/>
    <property type="evidence" value="ECO:0007669"/>
    <property type="project" value="UniProtKB-ARBA"/>
</dbReference>
<dbReference type="GO" id="GO:0000428">
    <property type="term" value="C:DNA-directed RNA polymerase complex"/>
    <property type="evidence" value="ECO:0007669"/>
    <property type="project" value="UniProtKB-KW"/>
</dbReference>
<dbReference type="GO" id="GO:0003677">
    <property type="term" value="F:DNA binding"/>
    <property type="evidence" value="ECO:0007669"/>
    <property type="project" value="UniProtKB-UniRule"/>
</dbReference>
<dbReference type="GO" id="GO:0003899">
    <property type="term" value="F:DNA-directed RNA polymerase activity"/>
    <property type="evidence" value="ECO:0007669"/>
    <property type="project" value="UniProtKB-UniRule"/>
</dbReference>
<dbReference type="GO" id="GO:0046983">
    <property type="term" value="F:protein dimerization activity"/>
    <property type="evidence" value="ECO:0007669"/>
    <property type="project" value="InterPro"/>
</dbReference>
<dbReference type="GO" id="GO:0006351">
    <property type="term" value="P:DNA-templated transcription"/>
    <property type="evidence" value="ECO:0007669"/>
    <property type="project" value="UniProtKB-UniRule"/>
</dbReference>
<dbReference type="CDD" id="cd06928">
    <property type="entry name" value="RNAP_alpha_NTD"/>
    <property type="match status" value="1"/>
</dbReference>
<dbReference type="FunFam" id="1.10.150.20:FF:000001">
    <property type="entry name" value="DNA-directed RNA polymerase subunit alpha"/>
    <property type="match status" value="1"/>
</dbReference>
<dbReference type="FunFam" id="2.170.120.12:FF:000001">
    <property type="entry name" value="DNA-directed RNA polymerase subunit alpha"/>
    <property type="match status" value="1"/>
</dbReference>
<dbReference type="Gene3D" id="1.10.150.20">
    <property type="entry name" value="5' to 3' exonuclease, C-terminal subdomain"/>
    <property type="match status" value="1"/>
</dbReference>
<dbReference type="Gene3D" id="2.170.120.12">
    <property type="entry name" value="DNA-directed RNA polymerase, insert domain"/>
    <property type="match status" value="1"/>
</dbReference>
<dbReference type="Gene3D" id="3.30.1360.10">
    <property type="entry name" value="RNA polymerase, RBP11-like subunit"/>
    <property type="match status" value="1"/>
</dbReference>
<dbReference type="HAMAP" id="MF_00059">
    <property type="entry name" value="RNApol_bact_RpoA"/>
    <property type="match status" value="1"/>
</dbReference>
<dbReference type="InterPro" id="IPR011262">
    <property type="entry name" value="DNA-dir_RNA_pol_insert"/>
</dbReference>
<dbReference type="InterPro" id="IPR011263">
    <property type="entry name" value="DNA-dir_RNA_pol_RpoA/D/Rpb3"/>
</dbReference>
<dbReference type="InterPro" id="IPR011773">
    <property type="entry name" value="DNA-dir_RpoA"/>
</dbReference>
<dbReference type="InterPro" id="IPR036603">
    <property type="entry name" value="RBP11-like"/>
</dbReference>
<dbReference type="InterPro" id="IPR011260">
    <property type="entry name" value="RNAP_asu_C"/>
</dbReference>
<dbReference type="InterPro" id="IPR036643">
    <property type="entry name" value="RNApol_insert_sf"/>
</dbReference>
<dbReference type="NCBIfam" id="NF003513">
    <property type="entry name" value="PRK05182.1-2"/>
    <property type="match status" value="1"/>
</dbReference>
<dbReference type="NCBIfam" id="NF003519">
    <property type="entry name" value="PRK05182.2-5"/>
    <property type="match status" value="1"/>
</dbReference>
<dbReference type="NCBIfam" id="TIGR02027">
    <property type="entry name" value="rpoA"/>
    <property type="match status" value="1"/>
</dbReference>
<dbReference type="Pfam" id="PF01000">
    <property type="entry name" value="RNA_pol_A_bac"/>
    <property type="match status" value="1"/>
</dbReference>
<dbReference type="Pfam" id="PF03118">
    <property type="entry name" value="RNA_pol_A_CTD"/>
    <property type="match status" value="1"/>
</dbReference>
<dbReference type="Pfam" id="PF01193">
    <property type="entry name" value="RNA_pol_L"/>
    <property type="match status" value="1"/>
</dbReference>
<dbReference type="SMART" id="SM00662">
    <property type="entry name" value="RPOLD"/>
    <property type="match status" value="1"/>
</dbReference>
<dbReference type="SUPFAM" id="SSF47789">
    <property type="entry name" value="C-terminal domain of RNA polymerase alpha subunit"/>
    <property type="match status" value="1"/>
</dbReference>
<dbReference type="SUPFAM" id="SSF56553">
    <property type="entry name" value="Insert subdomain of RNA polymerase alpha subunit"/>
    <property type="match status" value="1"/>
</dbReference>
<dbReference type="SUPFAM" id="SSF55257">
    <property type="entry name" value="RBP11-like subunits of RNA polymerase"/>
    <property type="match status" value="1"/>
</dbReference>
<feature type="chain" id="PRO_0000323647" description="DNA-directed RNA polymerase subunit alpha">
    <location>
        <begin position="1"/>
        <end position="333"/>
    </location>
</feature>
<feature type="region of interest" description="Alpha N-terminal domain (alpha-NTD)" evidence="1">
    <location>
        <begin position="1"/>
        <end position="234"/>
    </location>
</feature>
<feature type="region of interest" description="Alpha C-terminal domain (alpha-CTD)" evidence="1">
    <location>
        <begin position="248"/>
        <end position="333"/>
    </location>
</feature>
<name>RPOA_ECTM1</name>
<sequence>MQISVNEFLTPRHIDVQEVSPTRAKITLEPLERGFGHTLGNALRRILLSSMPGCAVVEAEIDGVLHEYSAIEGVQEDVIEILLNLKGLAIKLHGRDEVTLTLAKKGPGVVTAADIQLDHDVEIVNGDHVIANLAANGSLNMKLTVARGRGYEPADARQSDEDESRSIGRLQLDASFSPVRRVAYVVENARVEQRTNLDKLVIDLETNGTLDPEEAIRRAATILQQQLAAFVDLKGDSEPVVVEQEDEIDPILLRPVDDLELTVRSANCLKAENIYYIGDLIQRTEVELLKTPNLGKKSLTEIKDVLASRGLSLGMRLDNWPPASLKKDDKATA</sequence>
<comment type="function">
    <text evidence="1">DNA-dependent RNA polymerase catalyzes the transcription of DNA into RNA using the four ribonucleoside triphosphates as substrates.</text>
</comment>
<comment type="catalytic activity">
    <reaction evidence="1">
        <text>RNA(n) + a ribonucleoside 5'-triphosphate = RNA(n+1) + diphosphate</text>
        <dbReference type="Rhea" id="RHEA:21248"/>
        <dbReference type="Rhea" id="RHEA-COMP:14527"/>
        <dbReference type="Rhea" id="RHEA-COMP:17342"/>
        <dbReference type="ChEBI" id="CHEBI:33019"/>
        <dbReference type="ChEBI" id="CHEBI:61557"/>
        <dbReference type="ChEBI" id="CHEBI:140395"/>
        <dbReference type="EC" id="2.7.7.6"/>
    </reaction>
</comment>
<comment type="subunit">
    <text evidence="1">Homodimer. The RNAP catalytic core consists of 2 alpha, 1 beta, 1 beta' and 1 omega subunit. When a sigma factor is associated with the core the holoenzyme is formed, which can initiate transcription.</text>
</comment>
<comment type="domain">
    <text evidence="1">The N-terminal domain is essential for RNAP assembly and basal transcription, whereas the C-terminal domain is involved in interaction with transcriptional regulators and with upstream promoter elements.</text>
</comment>
<comment type="similarity">
    <text evidence="1">Belongs to the RNA polymerase alpha chain family.</text>
</comment>
<proteinExistence type="inferred from homology"/>
<protein>
    <recommendedName>
        <fullName evidence="1">DNA-directed RNA polymerase subunit alpha</fullName>
        <shortName evidence="1">RNAP subunit alpha</shortName>
        <ecNumber evidence="1">2.7.7.6</ecNumber>
    </recommendedName>
    <alternativeName>
        <fullName evidence="1">RNA polymerase subunit alpha</fullName>
    </alternativeName>
    <alternativeName>
        <fullName evidence="1">Transcriptase subunit alpha</fullName>
    </alternativeName>
</protein>
<organism>
    <name type="scientific">Ectopseudomonas mendocina (strain ymp)</name>
    <name type="common">Pseudomonas mendocina</name>
    <dbReference type="NCBI Taxonomy" id="399739"/>
    <lineage>
        <taxon>Bacteria</taxon>
        <taxon>Pseudomonadati</taxon>
        <taxon>Pseudomonadota</taxon>
        <taxon>Gammaproteobacteria</taxon>
        <taxon>Pseudomonadales</taxon>
        <taxon>Pseudomonadaceae</taxon>
        <taxon>Ectopseudomonas</taxon>
    </lineage>
</organism>
<accession>A4XZ65</accession>
<reference key="1">
    <citation type="submission" date="2007-04" db="EMBL/GenBank/DDBJ databases">
        <title>Complete sequence of Pseudomonas mendocina ymp.</title>
        <authorList>
            <consortium name="US DOE Joint Genome Institute"/>
            <person name="Copeland A."/>
            <person name="Lucas S."/>
            <person name="Lapidus A."/>
            <person name="Barry K."/>
            <person name="Glavina del Rio T."/>
            <person name="Dalin E."/>
            <person name="Tice H."/>
            <person name="Pitluck S."/>
            <person name="Kiss H."/>
            <person name="Brettin T."/>
            <person name="Detter J.C."/>
            <person name="Bruce D."/>
            <person name="Han C."/>
            <person name="Schmutz J."/>
            <person name="Larimer F."/>
            <person name="Land M."/>
            <person name="Hauser L."/>
            <person name="Kyrpides N."/>
            <person name="Mikhailova N."/>
            <person name="Hersman L."/>
            <person name="Dubois J."/>
            <person name="Maurice P."/>
            <person name="Richardson P."/>
        </authorList>
    </citation>
    <scope>NUCLEOTIDE SEQUENCE [LARGE SCALE GENOMIC DNA]</scope>
    <source>
        <strain>ymp</strain>
    </source>
</reference>
<keyword id="KW-0240">DNA-directed RNA polymerase</keyword>
<keyword id="KW-0548">Nucleotidyltransferase</keyword>
<keyword id="KW-0804">Transcription</keyword>
<keyword id="KW-0808">Transferase</keyword>